<protein>
    <recommendedName>
        <fullName evidence="1">Glycerol kinase</fullName>
        <ecNumber evidence="1">2.7.1.30</ecNumber>
    </recommendedName>
    <alternativeName>
        <fullName evidence="1">ATP:glycerol 3-phosphotransferase</fullName>
    </alternativeName>
    <alternativeName>
        <fullName evidence="1">Glycerokinase</fullName>
        <shortName evidence="1">GK</shortName>
    </alternativeName>
</protein>
<comment type="function">
    <text evidence="1">Key enzyme in the regulation of glycerol uptake and metabolism. Catalyzes the phosphorylation of glycerol to yield sn-glycerol 3-phosphate.</text>
</comment>
<comment type="catalytic activity">
    <reaction evidence="1">
        <text>glycerol + ATP = sn-glycerol 3-phosphate + ADP + H(+)</text>
        <dbReference type="Rhea" id="RHEA:21644"/>
        <dbReference type="ChEBI" id="CHEBI:15378"/>
        <dbReference type="ChEBI" id="CHEBI:17754"/>
        <dbReference type="ChEBI" id="CHEBI:30616"/>
        <dbReference type="ChEBI" id="CHEBI:57597"/>
        <dbReference type="ChEBI" id="CHEBI:456216"/>
        <dbReference type="EC" id="2.7.1.30"/>
    </reaction>
</comment>
<comment type="activity regulation">
    <text evidence="1">Inhibited by fructose 1,6-bisphosphate (FBP).</text>
</comment>
<comment type="pathway">
    <text evidence="1">Polyol metabolism; glycerol degradation via glycerol kinase pathway; sn-glycerol 3-phosphate from glycerol: step 1/1.</text>
</comment>
<comment type="similarity">
    <text evidence="1">Belongs to the FGGY kinase family.</text>
</comment>
<evidence type="ECO:0000255" key="1">
    <source>
        <dbReference type="HAMAP-Rule" id="MF_00186"/>
    </source>
</evidence>
<sequence>MTQTNNKHYIVALDQGTTSSRAIVLDRDANVVSVAQHEFTQIYPQSGWVEHDPMEIWATQSATLVEALAQAGIDHRQVAAIGITNQRETTVIWDKQSGRPIHNAIVWQCRRSAAICEELKRDSLEEHVRERTGLVIDPYFSATKIKWVLDHVEGSRERARRGELLFGTVDSWLIWKMTQGRVHVTDFTNAARTMLFDIHALDWDARLLEALDIPREMLPQVRSSSEVYGHACIAGGDEDDGIPIAGIAGDQQAALFGHMCVEPGQGKNTYGTGCFLLMNTGAKAVRSGHGLLTTIACGPRGEVAYALEGAIFNAGSTVQWLRDELKLIDDSFDSEYFATKVQDSNGVYLVPAFTGLGAPYWDPYARGAVFGLTRGVKADHLIRAALESIAYQTCDVLDAMQRDAGERLKALRVDGGAVSNNFLMQFQADLLGTPVERPAVKEVTALGAAYLAGLATGFWSGLDELRDKARIERVFEPACSEEKRRSLSAGWKKAVLRSQRWAEDD</sequence>
<proteinExistence type="inferred from homology"/>
<accession>C1DHV0</accession>
<gene>
    <name evidence="1" type="primary">glpK</name>
    <name type="ordered locus">Avin_45710</name>
</gene>
<name>GLPK_AZOVD</name>
<dbReference type="EC" id="2.7.1.30" evidence="1"/>
<dbReference type="EMBL" id="CP001157">
    <property type="protein sequence ID" value="ACO80683.1"/>
    <property type="molecule type" value="Genomic_DNA"/>
</dbReference>
<dbReference type="RefSeq" id="WP_012703050.1">
    <property type="nucleotide sequence ID" value="NC_012560.1"/>
</dbReference>
<dbReference type="SMR" id="C1DHV0"/>
<dbReference type="STRING" id="322710.Avin_45710"/>
<dbReference type="EnsemblBacteria" id="ACO80683">
    <property type="protein sequence ID" value="ACO80683"/>
    <property type="gene ID" value="Avin_45710"/>
</dbReference>
<dbReference type="GeneID" id="88187454"/>
<dbReference type="KEGG" id="avn:Avin_45710"/>
<dbReference type="eggNOG" id="COG0554">
    <property type="taxonomic scope" value="Bacteria"/>
</dbReference>
<dbReference type="HOGENOM" id="CLU_009281_2_3_6"/>
<dbReference type="OrthoDB" id="9805576at2"/>
<dbReference type="UniPathway" id="UPA00618">
    <property type="reaction ID" value="UER00672"/>
</dbReference>
<dbReference type="Proteomes" id="UP000002424">
    <property type="component" value="Chromosome"/>
</dbReference>
<dbReference type="GO" id="GO:0005829">
    <property type="term" value="C:cytosol"/>
    <property type="evidence" value="ECO:0007669"/>
    <property type="project" value="TreeGrafter"/>
</dbReference>
<dbReference type="GO" id="GO:0005524">
    <property type="term" value="F:ATP binding"/>
    <property type="evidence" value="ECO:0007669"/>
    <property type="project" value="UniProtKB-UniRule"/>
</dbReference>
<dbReference type="GO" id="GO:0004370">
    <property type="term" value="F:glycerol kinase activity"/>
    <property type="evidence" value="ECO:0000250"/>
    <property type="project" value="UniProtKB"/>
</dbReference>
<dbReference type="GO" id="GO:0019563">
    <property type="term" value="P:glycerol catabolic process"/>
    <property type="evidence" value="ECO:0007669"/>
    <property type="project" value="UniProtKB-UniRule"/>
</dbReference>
<dbReference type="GO" id="GO:0006071">
    <property type="term" value="P:glycerol metabolic process"/>
    <property type="evidence" value="ECO:0000250"/>
    <property type="project" value="UniProtKB"/>
</dbReference>
<dbReference type="GO" id="GO:0006072">
    <property type="term" value="P:glycerol-3-phosphate metabolic process"/>
    <property type="evidence" value="ECO:0007669"/>
    <property type="project" value="InterPro"/>
</dbReference>
<dbReference type="CDD" id="cd07769">
    <property type="entry name" value="ASKHA_NBD_FGGY_GK"/>
    <property type="match status" value="1"/>
</dbReference>
<dbReference type="FunFam" id="3.30.420.40:FF:000007">
    <property type="entry name" value="Glycerol kinase"/>
    <property type="match status" value="1"/>
</dbReference>
<dbReference type="FunFam" id="3.30.420.40:FF:000008">
    <property type="entry name" value="Glycerol kinase"/>
    <property type="match status" value="1"/>
</dbReference>
<dbReference type="Gene3D" id="3.30.420.40">
    <property type="match status" value="2"/>
</dbReference>
<dbReference type="HAMAP" id="MF_00186">
    <property type="entry name" value="Glycerol_kin"/>
    <property type="match status" value="1"/>
</dbReference>
<dbReference type="InterPro" id="IPR043129">
    <property type="entry name" value="ATPase_NBD"/>
</dbReference>
<dbReference type="InterPro" id="IPR000577">
    <property type="entry name" value="Carb_kinase_FGGY"/>
</dbReference>
<dbReference type="InterPro" id="IPR018483">
    <property type="entry name" value="Carb_kinase_FGGY_CS"/>
</dbReference>
<dbReference type="InterPro" id="IPR018485">
    <property type="entry name" value="FGGY_C"/>
</dbReference>
<dbReference type="InterPro" id="IPR018484">
    <property type="entry name" value="FGGY_N"/>
</dbReference>
<dbReference type="InterPro" id="IPR005999">
    <property type="entry name" value="Glycerol_kin"/>
</dbReference>
<dbReference type="NCBIfam" id="TIGR01311">
    <property type="entry name" value="glycerol_kin"/>
    <property type="match status" value="1"/>
</dbReference>
<dbReference type="NCBIfam" id="NF000756">
    <property type="entry name" value="PRK00047.1"/>
    <property type="match status" value="1"/>
</dbReference>
<dbReference type="PANTHER" id="PTHR10196:SF69">
    <property type="entry name" value="GLYCEROL KINASE"/>
    <property type="match status" value="1"/>
</dbReference>
<dbReference type="PANTHER" id="PTHR10196">
    <property type="entry name" value="SUGAR KINASE"/>
    <property type="match status" value="1"/>
</dbReference>
<dbReference type="Pfam" id="PF02782">
    <property type="entry name" value="FGGY_C"/>
    <property type="match status" value="1"/>
</dbReference>
<dbReference type="Pfam" id="PF00370">
    <property type="entry name" value="FGGY_N"/>
    <property type="match status" value="1"/>
</dbReference>
<dbReference type="PIRSF" id="PIRSF000538">
    <property type="entry name" value="GlpK"/>
    <property type="match status" value="1"/>
</dbReference>
<dbReference type="SUPFAM" id="SSF53067">
    <property type="entry name" value="Actin-like ATPase domain"/>
    <property type="match status" value="2"/>
</dbReference>
<dbReference type="PROSITE" id="PS00933">
    <property type="entry name" value="FGGY_KINASES_1"/>
    <property type="match status" value="1"/>
</dbReference>
<dbReference type="PROSITE" id="PS00445">
    <property type="entry name" value="FGGY_KINASES_2"/>
    <property type="match status" value="1"/>
</dbReference>
<feature type="chain" id="PRO_1000203945" description="Glycerol kinase">
    <location>
        <begin position="1"/>
        <end position="505"/>
    </location>
</feature>
<feature type="binding site" evidence="1">
    <location>
        <position position="17"/>
    </location>
    <ligand>
        <name>ADP</name>
        <dbReference type="ChEBI" id="CHEBI:456216"/>
    </ligand>
</feature>
<feature type="binding site" evidence="1">
    <location>
        <position position="17"/>
    </location>
    <ligand>
        <name>ATP</name>
        <dbReference type="ChEBI" id="CHEBI:30616"/>
    </ligand>
</feature>
<feature type="binding site" evidence="1">
    <location>
        <position position="17"/>
    </location>
    <ligand>
        <name>sn-glycerol 3-phosphate</name>
        <dbReference type="ChEBI" id="CHEBI:57597"/>
    </ligand>
</feature>
<feature type="binding site" evidence="1">
    <location>
        <position position="18"/>
    </location>
    <ligand>
        <name>ATP</name>
        <dbReference type="ChEBI" id="CHEBI:30616"/>
    </ligand>
</feature>
<feature type="binding site" evidence="1">
    <location>
        <position position="19"/>
    </location>
    <ligand>
        <name>ATP</name>
        <dbReference type="ChEBI" id="CHEBI:30616"/>
    </ligand>
</feature>
<feature type="binding site" evidence="1">
    <location>
        <position position="21"/>
    </location>
    <ligand>
        <name>ADP</name>
        <dbReference type="ChEBI" id="CHEBI:456216"/>
    </ligand>
</feature>
<feature type="binding site" evidence="1">
    <location>
        <position position="87"/>
    </location>
    <ligand>
        <name>glycerol</name>
        <dbReference type="ChEBI" id="CHEBI:17754"/>
    </ligand>
</feature>
<feature type="binding site" evidence="1">
    <location>
        <position position="87"/>
    </location>
    <ligand>
        <name>sn-glycerol 3-phosphate</name>
        <dbReference type="ChEBI" id="CHEBI:57597"/>
    </ligand>
</feature>
<feature type="binding site" evidence="1">
    <location>
        <position position="88"/>
    </location>
    <ligand>
        <name>glycerol</name>
        <dbReference type="ChEBI" id="CHEBI:17754"/>
    </ligand>
</feature>
<feature type="binding site" evidence="1">
    <location>
        <position position="88"/>
    </location>
    <ligand>
        <name>sn-glycerol 3-phosphate</name>
        <dbReference type="ChEBI" id="CHEBI:57597"/>
    </ligand>
</feature>
<feature type="binding site" evidence="1">
    <location>
        <position position="139"/>
    </location>
    <ligand>
        <name>glycerol</name>
        <dbReference type="ChEBI" id="CHEBI:17754"/>
    </ligand>
</feature>
<feature type="binding site" evidence="1">
    <location>
        <position position="139"/>
    </location>
    <ligand>
        <name>sn-glycerol 3-phosphate</name>
        <dbReference type="ChEBI" id="CHEBI:57597"/>
    </ligand>
</feature>
<feature type="binding site" evidence="1">
    <location>
        <position position="250"/>
    </location>
    <ligand>
        <name>glycerol</name>
        <dbReference type="ChEBI" id="CHEBI:17754"/>
    </ligand>
</feature>
<feature type="binding site" evidence="1">
    <location>
        <position position="250"/>
    </location>
    <ligand>
        <name>sn-glycerol 3-phosphate</name>
        <dbReference type="ChEBI" id="CHEBI:57597"/>
    </ligand>
</feature>
<feature type="binding site" evidence="1">
    <location>
        <position position="251"/>
    </location>
    <ligand>
        <name>glycerol</name>
        <dbReference type="ChEBI" id="CHEBI:17754"/>
    </ligand>
</feature>
<feature type="binding site" evidence="1">
    <location>
        <position position="272"/>
    </location>
    <ligand>
        <name>ADP</name>
        <dbReference type="ChEBI" id="CHEBI:456216"/>
    </ligand>
</feature>
<feature type="binding site" evidence="1">
    <location>
        <position position="272"/>
    </location>
    <ligand>
        <name>ATP</name>
        <dbReference type="ChEBI" id="CHEBI:30616"/>
    </ligand>
</feature>
<feature type="binding site" evidence="1">
    <location>
        <position position="315"/>
    </location>
    <ligand>
        <name>ADP</name>
        <dbReference type="ChEBI" id="CHEBI:456216"/>
    </ligand>
</feature>
<feature type="binding site" evidence="1">
    <location>
        <position position="315"/>
    </location>
    <ligand>
        <name>ATP</name>
        <dbReference type="ChEBI" id="CHEBI:30616"/>
    </ligand>
</feature>
<feature type="binding site" evidence="1">
    <location>
        <position position="319"/>
    </location>
    <ligand>
        <name>ATP</name>
        <dbReference type="ChEBI" id="CHEBI:30616"/>
    </ligand>
</feature>
<feature type="binding site" evidence="1">
    <location>
        <position position="416"/>
    </location>
    <ligand>
        <name>ADP</name>
        <dbReference type="ChEBI" id="CHEBI:456216"/>
    </ligand>
</feature>
<feature type="binding site" evidence="1">
    <location>
        <position position="416"/>
    </location>
    <ligand>
        <name>ATP</name>
        <dbReference type="ChEBI" id="CHEBI:30616"/>
    </ligand>
</feature>
<feature type="binding site" evidence="1">
    <location>
        <position position="420"/>
    </location>
    <ligand>
        <name>ADP</name>
        <dbReference type="ChEBI" id="CHEBI:456216"/>
    </ligand>
</feature>
<keyword id="KW-0067">ATP-binding</keyword>
<keyword id="KW-0319">Glycerol metabolism</keyword>
<keyword id="KW-0418">Kinase</keyword>
<keyword id="KW-0547">Nucleotide-binding</keyword>
<keyword id="KW-0808">Transferase</keyword>
<reference key="1">
    <citation type="journal article" date="2009" name="J. Bacteriol.">
        <title>Genome sequence of Azotobacter vinelandii, an obligate aerobe specialized to support diverse anaerobic metabolic processes.</title>
        <authorList>
            <person name="Setubal J.C."/>
            <person name="Dos Santos P."/>
            <person name="Goldman B.S."/>
            <person name="Ertesvaag H."/>
            <person name="Espin G."/>
            <person name="Rubio L.M."/>
            <person name="Valla S."/>
            <person name="Almeida N.F."/>
            <person name="Balasubramanian D."/>
            <person name="Cromes L."/>
            <person name="Curatti L."/>
            <person name="Du Z."/>
            <person name="Godsy E."/>
            <person name="Goodner B."/>
            <person name="Hellner-Burris K."/>
            <person name="Hernandez J.A."/>
            <person name="Houmiel K."/>
            <person name="Imperial J."/>
            <person name="Kennedy C."/>
            <person name="Larson T.J."/>
            <person name="Latreille P."/>
            <person name="Ligon L.S."/>
            <person name="Lu J."/>
            <person name="Maerk M."/>
            <person name="Miller N.M."/>
            <person name="Norton S."/>
            <person name="O'Carroll I.P."/>
            <person name="Paulsen I."/>
            <person name="Raulfs E.C."/>
            <person name="Roemer R."/>
            <person name="Rosser J."/>
            <person name="Segura D."/>
            <person name="Slater S."/>
            <person name="Stricklin S.L."/>
            <person name="Studholme D.J."/>
            <person name="Sun J."/>
            <person name="Viana C.J."/>
            <person name="Wallin E."/>
            <person name="Wang B."/>
            <person name="Wheeler C."/>
            <person name="Zhu H."/>
            <person name="Dean D.R."/>
            <person name="Dixon R."/>
            <person name="Wood D."/>
        </authorList>
    </citation>
    <scope>NUCLEOTIDE SEQUENCE [LARGE SCALE GENOMIC DNA]</scope>
    <source>
        <strain>DJ / ATCC BAA-1303</strain>
    </source>
</reference>
<organism>
    <name type="scientific">Azotobacter vinelandii (strain DJ / ATCC BAA-1303)</name>
    <dbReference type="NCBI Taxonomy" id="322710"/>
    <lineage>
        <taxon>Bacteria</taxon>
        <taxon>Pseudomonadati</taxon>
        <taxon>Pseudomonadota</taxon>
        <taxon>Gammaproteobacteria</taxon>
        <taxon>Pseudomonadales</taxon>
        <taxon>Pseudomonadaceae</taxon>
        <taxon>Azotobacter</taxon>
    </lineage>
</organism>